<feature type="chain" id="PRO_0000255015" description="Cytochrome b">
    <location>
        <begin position="1"/>
        <end position="379"/>
    </location>
</feature>
<feature type="transmembrane region" description="Helical" evidence="2">
    <location>
        <begin position="33"/>
        <end position="53"/>
    </location>
</feature>
<feature type="transmembrane region" description="Helical" evidence="2">
    <location>
        <begin position="77"/>
        <end position="98"/>
    </location>
</feature>
<feature type="transmembrane region" description="Helical" evidence="2">
    <location>
        <begin position="113"/>
        <end position="133"/>
    </location>
</feature>
<feature type="transmembrane region" description="Helical" evidence="2">
    <location>
        <begin position="178"/>
        <end position="198"/>
    </location>
</feature>
<feature type="transmembrane region" description="Helical" evidence="2">
    <location>
        <begin position="226"/>
        <end position="246"/>
    </location>
</feature>
<feature type="transmembrane region" description="Helical" evidence="2">
    <location>
        <begin position="288"/>
        <end position="308"/>
    </location>
</feature>
<feature type="transmembrane region" description="Helical" evidence="2">
    <location>
        <begin position="320"/>
        <end position="340"/>
    </location>
</feature>
<feature type="transmembrane region" description="Helical" evidence="2">
    <location>
        <begin position="347"/>
        <end position="367"/>
    </location>
</feature>
<feature type="binding site" description="axial binding residue" evidence="2">
    <location>
        <position position="83"/>
    </location>
    <ligand>
        <name>heme b</name>
        <dbReference type="ChEBI" id="CHEBI:60344"/>
        <label>b562</label>
    </ligand>
    <ligandPart>
        <name>Fe</name>
        <dbReference type="ChEBI" id="CHEBI:18248"/>
    </ligandPart>
</feature>
<feature type="binding site" description="axial binding residue" evidence="2">
    <location>
        <position position="97"/>
    </location>
    <ligand>
        <name>heme b</name>
        <dbReference type="ChEBI" id="CHEBI:60344"/>
        <label>b566</label>
    </ligand>
    <ligandPart>
        <name>Fe</name>
        <dbReference type="ChEBI" id="CHEBI:18248"/>
    </ligandPart>
</feature>
<feature type="binding site" description="axial binding residue" evidence="2">
    <location>
        <position position="182"/>
    </location>
    <ligand>
        <name>heme b</name>
        <dbReference type="ChEBI" id="CHEBI:60344"/>
        <label>b562</label>
    </ligand>
    <ligandPart>
        <name>Fe</name>
        <dbReference type="ChEBI" id="CHEBI:18248"/>
    </ligandPart>
</feature>
<feature type="binding site" description="axial binding residue" evidence="2">
    <location>
        <position position="196"/>
    </location>
    <ligand>
        <name>heme b</name>
        <dbReference type="ChEBI" id="CHEBI:60344"/>
        <label>b566</label>
    </ligand>
    <ligandPart>
        <name>Fe</name>
        <dbReference type="ChEBI" id="CHEBI:18248"/>
    </ligandPart>
</feature>
<feature type="binding site" evidence="2">
    <location>
        <position position="201"/>
    </location>
    <ligand>
        <name>a ubiquinone</name>
        <dbReference type="ChEBI" id="CHEBI:16389"/>
    </ligand>
</feature>
<sequence>MTNTPKSHPLIKIMNHSFIDLPAPSNISAWWNFGSLLGLCLGLQILTGLFLAMHYTADTTTAFSSVTHICRDVNYGWLIRYMHANGASMFFIFLYLHIGRGIYYGSYTFTNTWNIGVLLLFAVMATAFMGYVLPWGQMSFWGATVITNLLSAIPYIGPTLVEWIWGGFSVDKATLTRFFAFHFILPFIITAMVMIHLLFLHETGSNNPSGVNSDSDKIPFHPYYTIKDVLGILFMMITLMSLVMFTPDLLGDPDNYTPANPLNTPPHIKPEWYFLFAYAILRSIPNKLGGVLALVFSILILTLFPILHSSKQRSMSFRPLSQCLMWMLVANLLILTWIGGQPVEHPFITIGQLASVTYFFTILILMPSTALMENKLLKW</sequence>
<protein>
    <recommendedName>
        <fullName>Cytochrome b</fullName>
    </recommendedName>
    <alternativeName>
        <fullName>Complex III subunit 3</fullName>
    </alternativeName>
    <alternativeName>
        <fullName>Complex III subunit III</fullName>
    </alternativeName>
    <alternativeName>
        <fullName>Cytochrome b-c1 complex subunit 3</fullName>
    </alternativeName>
    <alternativeName>
        <fullName>Ubiquinol-cytochrome-c reductase complex cytochrome b subunit</fullName>
    </alternativeName>
</protein>
<reference key="1">
    <citation type="journal article" date="2001" name="Mol. Biol. Evol.">
        <title>Recurrent amplifications and deletions of satellite DNA accompanied chromosomal diversification in South American tuco-tucos (genus Ctenomys, Rodentia: Octodontidae): a phylogenetic approach.</title>
        <authorList>
            <person name="Slamovits C.H."/>
            <person name="Cook J.A."/>
            <person name="Lessa E.P."/>
            <person name="Rossi M.S."/>
        </authorList>
    </citation>
    <scope>NUCLEOTIDE SEQUENCE [GENOMIC DNA]</scope>
</reference>
<evidence type="ECO:0000250" key="1"/>
<evidence type="ECO:0000250" key="2">
    <source>
        <dbReference type="UniProtKB" id="P00157"/>
    </source>
</evidence>
<evidence type="ECO:0000255" key="3">
    <source>
        <dbReference type="PROSITE-ProRule" id="PRU00967"/>
    </source>
</evidence>
<evidence type="ECO:0000255" key="4">
    <source>
        <dbReference type="PROSITE-ProRule" id="PRU00968"/>
    </source>
</evidence>
<proteinExistence type="inferred from homology"/>
<name>CYB_CTEAR</name>
<geneLocation type="mitochondrion"/>
<accession>Q94WY7</accession>
<keyword id="KW-0249">Electron transport</keyword>
<keyword id="KW-0349">Heme</keyword>
<keyword id="KW-0408">Iron</keyword>
<keyword id="KW-0472">Membrane</keyword>
<keyword id="KW-0479">Metal-binding</keyword>
<keyword id="KW-0496">Mitochondrion</keyword>
<keyword id="KW-0999">Mitochondrion inner membrane</keyword>
<keyword id="KW-0679">Respiratory chain</keyword>
<keyword id="KW-0812">Transmembrane</keyword>
<keyword id="KW-1133">Transmembrane helix</keyword>
<keyword id="KW-0813">Transport</keyword>
<keyword id="KW-0830">Ubiquinone</keyword>
<organism>
    <name type="scientific">Ctenomys argentinus</name>
    <name type="common">Argentine tuco-tuco</name>
    <dbReference type="NCBI Taxonomy" id="63766"/>
    <lineage>
        <taxon>Eukaryota</taxon>
        <taxon>Metazoa</taxon>
        <taxon>Chordata</taxon>
        <taxon>Craniata</taxon>
        <taxon>Vertebrata</taxon>
        <taxon>Euteleostomi</taxon>
        <taxon>Mammalia</taxon>
        <taxon>Eutheria</taxon>
        <taxon>Euarchontoglires</taxon>
        <taxon>Glires</taxon>
        <taxon>Rodentia</taxon>
        <taxon>Hystricomorpha</taxon>
        <taxon>Ctenomyidae</taxon>
        <taxon>Ctenomys</taxon>
    </lineage>
</organism>
<gene>
    <name type="primary">MT-CYB</name>
    <name type="synonym">COB</name>
    <name type="synonym">CYTB</name>
    <name type="synonym">MTCYB</name>
</gene>
<dbReference type="EMBL" id="AF370680">
    <property type="protein sequence ID" value="AAL01844.1"/>
    <property type="molecule type" value="Genomic_DNA"/>
</dbReference>
<dbReference type="SMR" id="Q94WY7"/>
<dbReference type="GO" id="GO:0005743">
    <property type="term" value="C:mitochondrial inner membrane"/>
    <property type="evidence" value="ECO:0007669"/>
    <property type="project" value="UniProtKB-SubCell"/>
</dbReference>
<dbReference type="GO" id="GO:0045275">
    <property type="term" value="C:respiratory chain complex III"/>
    <property type="evidence" value="ECO:0007669"/>
    <property type="project" value="InterPro"/>
</dbReference>
<dbReference type="GO" id="GO:0046872">
    <property type="term" value="F:metal ion binding"/>
    <property type="evidence" value="ECO:0007669"/>
    <property type="project" value="UniProtKB-KW"/>
</dbReference>
<dbReference type="GO" id="GO:0008121">
    <property type="term" value="F:ubiquinol-cytochrome-c reductase activity"/>
    <property type="evidence" value="ECO:0007669"/>
    <property type="project" value="InterPro"/>
</dbReference>
<dbReference type="GO" id="GO:0006122">
    <property type="term" value="P:mitochondrial electron transport, ubiquinol to cytochrome c"/>
    <property type="evidence" value="ECO:0007669"/>
    <property type="project" value="TreeGrafter"/>
</dbReference>
<dbReference type="CDD" id="cd00290">
    <property type="entry name" value="cytochrome_b_C"/>
    <property type="match status" value="1"/>
</dbReference>
<dbReference type="CDD" id="cd00284">
    <property type="entry name" value="Cytochrome_b_N"/>
    <property type="match status" value="1"/>
</dbReference>
<dbReference type="FunFam" id="1.20.810.10:FF:000002">
    <property type="entry name" value="Cytochrome b"/>
    <property type="match status" value="1"/>
</dbReference>
<dbReference type="Gene3D" id="1.20.810.10">
    <property type="entry name" value="Cytochrome Bc1 Complex, Chain C"/>
    <property type="match status" value="1"/>
</dbReference>
<dbReference type="InterPro" id="IPR005798">
    <property type="entry name" value="Cyt_b/b6_C"/>
</dbReference>
<dbReference type="InterPro" id="IPR036150">
    <property type="entry name" value="Cyt_b/b6_C_sf"/>
</dbReference>
<dbReference type="InterPro" id="IPR005797">
    <property type="entry name" value="Cyt_b/b6_N"/>
</dbReference>
<dbReference type="InterPro" id="IPR027387">
    <property type="entry name" value="Cytb/b6-like_sf"/>
</dbReference>
<dbReference type="InterPro" id="IPR030689">
    <property type="entry name" value="Cytochrome_b"/>
</dbReference>
<dbReference type="InterPro" id="IPR048260">
    <property type="entry name" value="Cytochrome_b_C_euk/bac"/>
</dbReference>
<dbReference type="InterPro" id="IPR048259">
    <property type="entry name" value="Cytochrome_b_N_euk/bac"/>
</dbReference>
<dbReference type="InterPro" id="IPR016174">
    <property type="entry name" value="Di-haem_cyt_TM"/>
</dbReference>
<dbReference type="PANTHER" id="PTHR19271">
    <property type="entry name" value="CYTOCHROME B"/>
    <property type="match status" value="1"/>
</dbReference>
<dbReference type="PANTHER" id="PTHR19271:SF16">
    <property type="entry name" value="CYTOCHROME B"/>
    <property type="match status" value="1"/>
</dbReference>
<dbReference type="Pfam" id="PF00032">
    <property type="entry name" value="Cytochrom_B_C"/>
    <property type="match status" value="1"/>
</dbReference>
<dbReference type="Pfam" id="PF00033">
    <property type="entry name" value="Cytochrome_B"/>
    <property type="match status" value="1"/>
</dbReference>
<dbReference type="PIRSF" id="PIRSF038885">
    <property type="entry name" value="COB"/>
    <property type="match status" value="1"/>
</dbReference>
<dbReference type="SUPFAM" id="SSF81648">
    <property type="entry name" value="a domain/subunit of cytochrome bc1 complex (Ubiquinol-cytochrome c reductase)"/>
    <property type="match status" value="1"/>
</dbReference>
<dbReference type="SUPFAM" id="SSF81342">
    <property type="entry name" value="Transmembrane di-heme cytochromes"/>
    <property type="match status" value="1"/>
</dbReference>
<dbReference type="PROSITE" id="PS51003">
    <property type="entry name" value="CYTB_CTER"/>
    <property type="match status" value="1"/>
</dbReference>
<dbReference type="PROSITE" id="PS51002">
    <property type="entry name" value="CYTB_NTER"/>
    <property type="match status" value="1"/>
</dbReference>
<comment type="function">
    <text evidence="2">Component of the ubiquinol-cytochrome c reductase complex (complex III or cytochrome b-c1 complex) that is part of the mitochondrial respiratory chain. The b-c1 complex mediates electron transfer from ubiquinol to cytochrome c. Contributes to the generation of a proton gradient across the mitochondrial membrane that is then used for ATP synthesis.</text>
</comment>
<comment type="cofactor">
    <cofactor evidence="2">
        <name>heme b</name>
        <dbReference type="ChEBI" id="CHEBI:60344"/>
    </cofactor>
    <text evidence="2">Binds 2 heme b groups non-covalently.</text>
</comment>
<comment type="subunit">
    <text evidence="2">The cytochrome bc1 complex contains 11 subunits: 3 respiratory subunits (MT-CYB, CYC1 and UQCRFS1), 2 core proteins (UQCRC1 and UQCRC2) and 6 low-molecular weight proteins (UQCRH/QCR6, UQCRB/QCR7, UQCRQ/QCR8, UQCR10/QCR9, UQCR11/QCR10 and a cleavage product of UQCRFS1). This cytochrome bc1 complex then forms a dimer.</text>
</comment>
<comment type="subcellular location">
    <subcellularLocation>
        <location evidence="2">Mitochondrion inner membrane</location>
        <topology evidence="2">Multi-pass membrane protein</topology>
    </subcellularLocation>
</comment>
<comment type="miscellaneous">
    <text evidence="1">Heme 1 (or BL or b562) is low-potential and absorbs at about 562 nm, and heme 2 (or BH or b566) is high-potential and absorbs at about 566 nm.</text>
</comment>
<comment type="similarity">
    <text evidence="3 4">Belongs to the cytochrome b family.</text>
</comment>
<comment type="caution">
    <text evidence="2">The full-length protein contains only eight transmembrane helices, not nine as predicted by bioinformatics tools.</text>
</comment>